<evidence type="ECO:0000250" key="1"/>
<evidence type="ECO:0000255" key="2">
    <source>
        <dbReference type="PROSITE-ProRule" id="PRU00366"/>
    </source>
</evidence>
<evidence type="ECO:0000256" key="3">
    <source>
        <dbReference type="SAM" id="MobiDB-lite"/>
    </source>
</evidence>
<evidence type="ECO:0000303" key="4">
    <source>
    </source>
</evidence>
<evidence type="ECO:0000305" key="5"/>
<feature type="chain" id="PRO_0000290363" description="AP2-like ethylene-responsive transcription factor At1g79700">
    <location>
        <begin position="1"/>
        <end position="303"/>
    </location>
</feature>
<feature type="DNA-binding region" description="AP2/ERF 1" evidence="2">
    <location>
        <begin position="52"/>
        <end position="118"/>
    </location>
</feature>
<feature type="DNA-binding region" description="AP2/ERF 2" evidence="2">
    <location>
        <begin position="154"/>
        <end position="202"/>
    </location>
</feature>
<feature type="region of interest" description="Disordered" evidence="3">
    <location>
        <begin position="1"/>
        <end position="55"/>
    </location>
</feature>
<feature type="region of interest" description="Disordered" evidence="3">
    <location>
        <begin position="212"/>
        <end position="259"/>
    </location>
</feature>
<feature type="compositionally biased region" description="Basic residues" evidence="3">
    <location>
        <begin position="1"/>
        <end position="10"/>
    </location>
</feature>
<feature type="compositionally biased region" description="Polar residues" evidence="3">
    <location>
        <begin position="20"/>
        <end position="32"/>
    </location>
</feature>
<feature type="compositionally biased region" description="Basic and acidic residues" evidence="3">
    <location>
        <begin position="214"/>
        <end position="243"/>
    </location>
</feature>
<feature type="splice variant" id="VSP_026149" description="In isoform 2." evidence="4">
    <original>ATQEEAAIAYDIAAIEYRGLNAVT</original>
    <variation>GNKYLYLGTYGISFHYPYFIVIFL</variation>
    <location>
        <begin position="176"/>
        <end position="199"/>
    </location>
</feature>
<feature type="splice variant" id="VSP_026150" description="In isoform 2." evidence="4">
    <location>
        <begin position="200"/>
        <end position="303"/>
    </location>
</feature>
<feature type="sequence conflict" description="In Ref. 4; BAC41971." evidence="5" ref="4">
    <original>E</original>
    <variation>G</variation>
    <location>
        <position position="135"/>
    </location>
</feature>
<feature type="sequence conflict" description="In Ref. 1; CAE45641." evidence="5" ref="1">
    <original>S</original>
    <variation>N</variation>
    <location>
        <position position="204"/>
    </location>
</feature>
<gene>
    <name type="ordered locus">At1g79700</name>
    <name type="ORF">F19K16.32</name>
    <name type="ORF">F20B17.12</name>
</gene>
<protein>
    <recommendedName>
        <fullName>AP2-like ethylene-responsive transcription factor At1g79700</fullName>
    </recommendedName>
</protein>
<reference key="1">
    <citation type="submission" date="2003-08" db="EMBL/GenBank/DDBJ databases">
        <title>Arabidopsis thaliana putative AP2 domain transcription factor, similar to the At1g79700 protein encoded by chromosome 1.</title>
        <authorList>
            <person name="Gong W."/>
            <person name="Pan Y."/>
            <person name="Peng X.Y."/>
            <person name="Yang J."/>
            <person name="Zhu Y.X."/>
        </authorList>
    </citation>
    <scope>NUCLEOTIDE SEQUENCE [MRNA] (ISOFORM 1)</scope>
    <source>
        <strain>cv. Columbia</strain>
    </source>
</reference>
<reference key="2">
    <citation type="journal article" date="2000" name="Nature">
        <title>Sequence and analysis of chromosome 1 of the plant Arabidopsis thaliana.</title>
        <authorList>
            <person name="Theologis A."/>
            <person name="Ecker J.R."/>
            <person name="Palm C.J."/>
            <person name="Federspiel N.A."/>
            <person name="Kaul S."/>
            <person name="White O."/>
            <person name="Alonso J."/>
            <person name="Altafi H."/>
            <person name="Araujo R."/>
            <person name="Bowman C.L."/>
            <person name="Brooks S.Y."/>
            <person name="Buehler E."/>
            <person name="Chan A."/>
            <person name="Chao Q."/>
            <person name="Chen H."/>
            <person name="Cheuk R.F."/>
            <person name="Chin C.W."/>
            <person name="Chung M.K."/>
            <person name="Conn L."/>
            <person name="Conway A.B."/>
            <person name="Conway A.R."/>
            <person name="Creasy T.H."/>
            <person name="Dewar K."/>
            <person name="Dunn P."/>
            <person name="Etgu P."/>
            <person name="Feldblyum T.V."/>
            <person name="Feng J.-D."/>
            <person name="Fong B."/>
            <person name="Fujii C.Y."/>
            <person name="Gill J.E."/>
            <person name="Goldsmith A.D."/>
            <person name="Haas B."/>
            <person name="Hansen N.F."/>
            <person name="Hughes B."/>
            <person name="Huizar L."/>
            <person name="Hunter J.L."/>
            <person name="Jenkins J."/>
            <person name="Johnson-Hopson C."/>
            <person name="Khan S."/>
            <person name="Khaykin E."/>
            <person name="Kim C.J."/>
            <person name="Koo H.L."/>
            <person name="Kremenetskaia I."/>
            <person name="Kurtz D.B."/>
            <person name="Kwan A."/>
            <person name="Lam B."/>
            <person name="Langin-Hooper S."/>
            <person name="Lee A."/>
            <person name="Lee J.M."/>
            <person name="Lenz C.A."/>
            <person name="Li J.H."/>
            <person name="Li Y.-P."/>
            <person name="Lin X."/>
            <person name="Liu S.X."/>
            <person name="Liu Z.A."/>
            <person name="Luros J.S."/>
            <person name="Maiti R."/>
            <person name="Marziali A."/>
            <person name="Militscher J."/>
            <person name="Miranda M."/>
            <person name="Nguyen M."/>
            <person name="Nierman W.C."/>
            <person name="Osborne B.I."/>
            <person name="Pai G."/>
            <person name="Peterson J."/>
            <person name="Pham P.K."/>
            <person name="Rizzo M."/>
            <person name="Rooney T."/>
            <person name="Rowley D."/>
            <person name="Sakano H."/>
            <person name="Salzberg S.L."/>
            <person name="Schwartz J.R."/>
            <person name="Shinn P."/>
            <person name="Southwick A.M."/>
            <person name="Sun H."/>
            <person name="Tallon L.J."/>
            <person name="Tambunga G."/>
            <person name="Toriumi M.J."/>
            <person name="Town C.D."/>
            <person name="Utterback T."/>
            <person name="Van Aken S."/>
            <person name="Vaysberg M."/>
            <person name="Vysotskaia V.S."/>
            <person name="Walker M."/>
            <person name="Wu D."/>
            <person name="Yu G."/>
            <person name="Fraser C.M."/>
            <person name="Venter J.C."/>
            <person name="Davis R.W."/>
        </authorList>
    </citation>
    <scope>NUCLEOTIDE SEQUENCE [LARGE SCALE GENOMIC DNA]</scope>
    <source>
        <strain>cv. Columbia</strain>
    </source>
</reference>
<reference key="3">
    <citation type="journal article" date="2017" name="Plant J.">
        <title>Araport11: a complete reannotation of the Arabidopsis thaliana reference genome.</title>
        <authorList>
            <person name="Cheng C.Y."/>
            <person name="Krishnakumar V."/>
            <person name="Chan A.P."/>
            <person name="Thibaud-Nissen F."/>
            <person name="Schobel S."/>
            <person name="Town C.D."/>
        </authorList>
    </citation>
    <scope>GENOME REANNOTATION</scope>
    <source>
        <strain>cv. Columbia</strain>
    </source>
</reference>
<reference key="4">
    <citation type="journal article" date="2002" name="Science">
        <title>Functional annotation of a full-length Arabidopsis cDNA collection.</title>
        <authorList>
            <person name="Seki M."/>
            <person name="Narusaka M."/>
            <person name="Kamiya A."/>
            <person name="Ishida J."/>
            <person name="Satou M."/>
            <person name="Sakurai T."/>
            <person name="Nakajima M."/>
            <person name="Enju A."/>
            <person name="Akiyama K."/>
            <person name="Oono Y."/>
            <person name="Muramatsu M."/>
            <person name="Hayashizaki Y."/>
            <person name="Kawai J."/>
            <person name="Carninci P."/>
            <person name="Itoh M."/>
            <person name="Ishii Y."/>
            <person name="Arakawa T."/>
            <person name="Shibata K."/>
            <person name="Shinagawa A."/>
            <person name="Shinozaki K."/>
        </authorList>
    </citation>
    <scope>NUCLEOTIDE SEQUENCE [LARGE SCALE MRNA] (ISOFORM 2)</scope>
    <source>
        <strain>cv. Columbia</strain>
    </source>
</reference>
<reference key="5">
    <citation type="submission" date="2006-11" db="EMBL/GenBank/DDBJ databases">
        <title>Arabidopsis ORF clones.</title>
        <authorList>
            <person name="Bautista V.R."/>
            <person name="Kim C.J."/>
            <person name="Chen H."/>
            <person name="Quinitio C."/>
            <person name="Ecker J.R."/>
        </authorList>
    </citation>
    <scope>NUCLEOTIDE SEQUENCE [LARGE SCALE MRNA] (ISOFORM 1)</scope>
    <source>
        <strain>cv. Columbia</strain>
    </source>
</reference>
<reference key="6">
    <citation type="journal article" date="2006" name="Plant Physiol.">
        <title>Genome-wide analysis of the ERF gene family in Arabidopsis and rice.</title>
        <authorList>
            <person name="Nakano T."/>
            <person name="Suzuki K."/>
            <person name="Fujimura T."/>
            <person name="Shinshi H."/>
        </authorList>
    </citation>
    <scope>GENE FAMILY</scope>
    <scope>NOMENCLATURE</scope>
</reference>
<organism>
    <name type="scientific">Arabidopsis thaliana</name>
    <name type="common">Mouse-ear cress</name>
    <dbReference type="NCBI Taxonomy" id="3702"/>
    <lineage>
        <taxon>Eukaryota</taxon>
        <taxon>Viridiplantae</taxon>
        <taxon>Streptophyta</taxon>
        <taxon>Embryophyta</taxon>
        <taxon>Tracheophyta</taxon>
        <taxon>Spermatophyta</taxon>
        <taxon>Magnoliopsida</taxon>
        <taxon>eudicotyledons</taxon>
        <taxon>Gunneridae</taxon>
        <taxon>Pentapetalae</taxon>
        <taxon>rosids</taxon>
        <taxon>malvids</taxon>
        <taxon>Brassicales</taxon>
        <taxon>Brassicaceae</taxon>
        <taxon>Camelineae</taxon>
        <taxon>Arabidopsis</taxon>
    </lineage>
</organism>
<keyword id="KW-0010">Activator</keyword>
<keyword id="KW-0025">Alternative splicing</keyword>
<keyword id="KW-0238">DNA-binding</keyword>
<keyword id="KW-0936">Ethylene signaling pathway</keyword>
<keyword id="KW-0539">Nucleus</keyword>
<keyword id="KW-1185">Reference proteome</keyword>
<keyword id="KW-0677">Repeat</keyword>
<keyword id="KW-0804">Transcription</keyword>
<keyword id="KW-0805">Transcription regulation</keyword>
<accession>A0JPZ8</accession>
<accession>Q70II2</accession>
<accession>Q8GYZ5</accession>
<accession>Q9CA81</accession>
<accession>Q9MA06</accession>
<proteinExistence type="evidence at transcript level"/>
<name>AP2L3_ARATH</name>
<sequence>MAKVSGRSKKTIVDDEISDKTASASESASIALTSKRKRKSPPRNAPLQRSSPYRGVTRHRWTGRYEAHLWDKNSWNDTQTKKGRQVYLGAYDEEEAAARAYDLAALKYWGRDTLLNFPLPSYDEDVKEMEGQSKEEYIGSLRRKSSGFSRGVSKYRGVARHHHNGRWEARIGRVFATQEEAAIAYDIAAIEYRGLNAVTNFDVSRYLNPNAAADKADSDSKPIRSPSREPESSDDNKSPKSEEVIEPSTSPEVIPTRRSFPDDIQTYFGCQDSGKLATEEDVIFDCFNSYINPGFYNEFDYGP</sequence>
<comment type="function">
    <text evidence="1">Probably acts as a transcriptional activator. Binds to the GCC-box pathogenesis-related promoter element. May be involved in the regulation of gene expression by stress factors and by components of stress signal transduction pathways (By similarity).</text>
</comment>
<comment type="subcellular location">
    <subcellularLocation>
        <location evidence="5">Nucleus</location>
    </subcellularLocation>
</comment>
<comment type="alternative products">
    <event type="alternative splicing"/>
    <isoform>
        <id>A0JPZ8-1</id>
        <name>1</name>
        <sequence type="displayed"/>
    </isoform>
    <isoform>
        <id>A0JPZ8-2</id>
        <name>2</name>
        <sequence type="described" ref="VSP_026149 VSP_026150"/>
    </isoform>
</comment>
<comment type="similarity">
    <text evidence="5">Belongs to the AP2/ERF transcription factor family. AP2 subfamily.</text>
</comment>
<comment type="sequence caution" evidence="5">
    <conflict type="erroneous gene model prediction">
        <sequence resource="EMBL-CDS" id="AAF68121"/>
    </conflict>
</comment>
<dbReference type="EMBL" id="AJ580379">
    <property type="protein sequence ID" value="CAE45641.1"/>
    <property type="molecule type" value="mRNA"/>
</dbReference>
<dbReference type="EMBL" id="AC010793">
    <property type="protein sequence ID" value="AAF68121.1"/>
    <property type="status" value="ALT_SEQ"/>
    <property type="molecule type" value="Genomic_DNA"/>
</dbReference>
<dbReference type="EMBL" id="AC011717">
    <property type="protein sequence ID" value="AAG52255.1"/>
    <property type="molecule type" value="Genomic_DNA"/>
</dbReference>
<dbReference type="EMBL" id="CP002684">
    <property type="protein sequence ID" value="AEE36288.1"/>
    <property type="molecule type" value="Genomic_DNA"/>
</dbReference>
<dbReference type="EMBL" id="AK117300">
    <property type="protein sequence ID" value="BAC41971.1"/>
    <property type="molecule type" value="mRNA"/>
</dbReference>
<dbReference type="EMBL" id="BT029368">
    <property type="protein sequence ID" value="ABK32182.1"/>
    <property type="molecule type" value="mRNA"/>
</dbReference>
<dbReference type="PIR" id="H96827">
    <property type="entry name" value="H96827"/>
</dbReference>
<dbReference type="RefSeq" id="NP_178088.2">
    <molecule id="A0JPZ8-1"/>
    <property type="nucleotide sequence ID" value="NM_106619.3"/>
</dbReference>
<dbReference type="SMR" id="A0JPZ8"/>
<dbReference type="FunCoup" id="A0JPZ8">
    <property type="interactions" value="35"/>
</dbReference>
<dbReference type="STRING" id="3702.A0JPZ8"/>
<dbReference type="PaxDb" id="3702-AT1G79700.2"/>
<dbReference type="EnsemblPlants" id="AT1G79700.1">
    <molecule id="A0JPZ8-1"/>
    <property type="protein sequence ID" value="AT1G79700.1"/>
    <property type="gene ID" value="AT1G79700"/>
</dbReference>
<dbReference type="GeneID" id="844309"/>
<dbReference type="Gramene" id="AT1G79700.1">
    <molecule id="A0JPZ8-1"/>
    <property type="protein sequence ID" value="AT1G79700.1"/>
    <property type="gene ID" value="AT1G79700"/>
</dbReference>
<dbReference type="KEGG" id="ath:AT1G79700"/>
<dbReference type="Araport" id="AT1G79700"/>
<dbReference type="TAIR" id="AT1G79700">
    <property type="gene designation" value="WRI4"/>
</dbReference>
<dbReference type="eggNOG" id="ENOG502QUXV">
    <property type="taxonomic scope" value="Eukaryota"/>
</dbReference>
<dbReference type="InParanoid" id="A0JPZ8"/>
<dbReference type="OrthoDB" id="207175at2759"/>
<dbReference type="PhylomeDB" id="A0JPZ8"/>
<dbReference type="PRO" id="PR:A0JPZ8"/>
<dbReference type="Proteomes" id="UP000006548">
    <property type="component" value="Chromosome 1"/>
</dbReference>
<dbReference type="ExpressionAtlas" id="A0JPZ8">
    <property type="expression patterns" value="baseline and differential"/>
</dbReference>
<dbReference type="GO" id="GO:0005634">
    <property type="term" value="C:nucleus"/>
    <property type="evidence" value="ECO:0007669"/>
    <property type="project" value="UniProtKB-SubCell"/>
</dbReference>
<dbReference type="GO" id="GO:0003677">
    <property type="term" value="F:DNA binding"/>
    <property type="evidence" value="ECO:0007669"/>
    <property type="project" value="UniProtKB-KW"/>
</dbReference>
<dbReference type="GO" id="GO:0003700">
    <property type="term" value="F:DNA-binding transcription factor activity"/>
    <property type="evidence" value="ECO:0007669"/>
    <property type="project" value="InterPro"/>
</dbReference>
<dbReference type="GO" id="GO:0009873">
    <property type="term" value="P:ethylene-activated signaling pathway"/>
    <property type="evidence" value="ECO:0007669"/>
    <property type="project" value="UniProtKB-KW"/>
</dbReference>
<dbReference type="FunFam" id="3.30.730.10:FF:000004">
    <property type="entry name" value="AP2-like ethylene-responsive transcription factor"/>
    <property type="match status" value="1"/>
</dbReference>
<dbReference type="Gene3D" id="3.30.730.10">
    <property type="entry name" value="AP2/ERF domain"/>
    <property type="match status" value="2"/>
</dbReference>
<dbReference type="InterPro" id="IPR001471">
    <property type="entry name" value="AP2/ERF_dom"/>
</dbReference>
<dbReference type="InterPro" id="IPR036955">
    <property type="entry name" value="AP2/ERF_dom_sf"/>
</dbReference>
<dbReference type="InterPro" id="IPR016177">
    <property type="entry name" value="DNA-bd_dom_sf"/>
</dbReference>
<dbReference type="PANTHER" id="PTHR32467">
    <property type="entry name" value="AP2-LIKE ETHYLENE-RESPONSIVE TRANSCRIPTION FACTOR"/>
    <property type="match status" value="1"/>
</dbReference>
<dbReference type="PANTHER" id="PTHR32467:SF243">
    <property type="entry name" value="AP2_ERF DOMAIN-CONTAINING PROTEIN"/>
    <property type="match status" value="1"/>
</dbReference>
<dbReference type="Pfam" id="PF00847">
    <property type="entry name" value="AP2"/>
    <property type="match status" value="1"/>
</dbReference>
<dbReference type="PRINTS" id="PR00367">
    <property type="entry name" value="ETHRSPELEMNT"/>
</dbReference>
<dbReference type="SMART" id="SM00380">
    <property type="entry name" value="AP2"/>
    <property type="match status" value="2"/>
</dbReference>
<dbReference type="SUPFAM" id="SSF54171">
    <property type="entry name" value="DNA-binding domain"/>
    <property type="match status" value="2"/>
</dbReference>
<dbReference type="PROSITE" id="PS51032">
    <property type="entry name" value="AP2_ERF"/>
    <property type="match status" value="2"/>
</dbReference>